<protein>
    <recommendedName>
        <fullName>SHC-transforming protein 1</fullName>
    </recommendedName>
    <alternativeName>
        <fullName>Src homology 2 domain-containing-transforming protein C1</fullName>
        <shortName>SH2 domain protein C1</shortName>
    </alternativeName>
</protein>
<keyword id="KW-0007">Acetylation</keyword>
<keyword id="KW-0037">Angiogenesis</keyword>
<keyword id="KW-0965">Cell junction</keyword>
<keyword id="KW-0963">Cytoplasm</keyword>
<keyword id="KW-0341">Growth regulation</keyword>
<keyword id="KW-0597">Phosphoprotein</keyword>
<keyword id="KW-1185">Reference proteome</keyword>
<keyword id="KW-0727">SH2 domain</keyword>
<proteinExistence type="evidence at transcript level"/>
<reference key="1">
    <citation type="submission" date="2004-11" db="EMBL/GenBank/DDBJ databases">
        <authorList>
            <consortium name="The German cDNA consortium"/>
        </authorList>
    </citation>
    <scope>NUCLEOTIDE SEQUENCE [LARGE SCALE MRNA]</scope>
    <source>
        <tissue>Brain cortex</tissue>
    </source>
</reference>
<feature type="chain" id="PRO_0000327221" description="SHC-transforming protein 1">
    <location>
        <begin position="1"/>
        <end position="583"/>
    </location>
</feature>
<feature type="domain" description="PID" evidence="5">
    <location>
        <begin position="156"/>
        <end position="339"/>
    </location>
</feature>
<feature type="domain" description="SH2" evidence="6">
    <location>
        <begin position="488"/>
        <end position="579"/>
    </location>
</feature>
<feature type="region of interest" description="Disordered" evidence="7">
    <location>
        <begin position="1"/>
        <end position="92"/>
    </location>
</feature>
<feature type="region of interest" description="Disordered" evidence="7">
    <location>
        <begin position="113"/>
        <end position="137"/>
    </location>
</feature>
<feature type="region of interest" description="CH1">
    <location>
        <begin position="340"/>
        <end position="487"/>
    </location>
</feature>
<feature type="region of interest" description="Disordered" evidence="7">
    <location>
        <begin position="372"/>
        <end position="416"/>
    </location>
</feature>
<feature type="compositionally biased region" description="Low complexity" evidence="7">
    <location>
        <begin position="16"/>
        <end position="44"/>
    </location>
</feature>
<feature type="modified residue" description="N-acetylmethionine" evidence="2">
    <location>
        <position position="1"/>
    </location>
</feature>
<feature type="modified residue" description="Phosphoserine" evidence="2">
    <location>
        <position position="36"/>
    </location>
</feature>
<feature type="modified residue" description="Phosphoserine" evidence="2">
    <location>
        <position position="139"/>
    </location>
</feature>
<feature type="modified residue" description="N6-acetyllysine" evidence="3">
    <location>
        <position position="154"/>
    </location>
</feature>
<feature type="modified residue" description="Phosphotyrosine" evidence="2">
    <location>
        <position position="349"/>
    </location>
</feature>
<feature type="modified residue" description="Phosphotyrosine" evidence="2">
    <location>
        <position position="350"/>
    </location>
</feature>
<feature type="modified residue" description="Phosphotyrosine" evidence="2">
    <location>
        <position position="427"/>
    </location>
</feature>
<feature type="modified residue" description="Phosphoserine" evidence="2">
    <location>
        <position position="453"/>
    </location>
</feature>
<organism>
    <name type="scientific">Pongo abelii</name>
    <name type="common">Sumatran orangutan</name>
    <name type="synonym">Pongo pygmaeus abelii</name>
    <dbReference type="NCBI Taxonomy" id="9601"/>
    <lineage>
        <taxon>Eukaryota</taxon>
        <taxon>Metazoa</taxon>
        <taxon>Chordata</taxon>
        <taxon>Craniata</taxon>
        <taxon>Vertebrata</taxon>
        <taxon>Euteleostomi</taxon>
        <taxon>Mammalia</taxon>
        <taxon>Eutheria</taxon>
        <taxon>Euarchontoglires</taxon>
        <taxon>Primates</taxon>
        <taxon>Haplorrhini</taxon>
        <taxon>Catarrhini</taxon>
        <taxon>Hominidae</taxon>
        <taxon>Pongo</taxon>
    </lineage>
</organism>
<accession>Q5R7W7</accession>
<evidence type="ECO:0000250" key="1"/>
<evidence type="ECO:0000250" key="2">
    <source>
        <dbReference type="UniProtKB" id="P29353"/>
    </source>
</evidence>
<evidence type="ECO:0000250" key="3">
    <source>
        <dbReference type="UniProtKB" id="P98083"/>
    </source>
</evidence>
<evidence type="ECO:0000250" key="4">
    <source>
        <dbReference type="UniProtKB" id="Q5M824"/>
    </source>
</evidence>
<evidence type="ECO:0000255" key="5">
    <source>
        <dbReference type="PROSITE-ProRule" id="PRU00148"/>
    </source>
</evidence>
<evidence type="ECO:0000255" key="6">
    <source>
        <dbReference type="PROSITE-ProRule" id="PRU00191"/>
    </source>
</evidence>
<evidence type="ECO:0000256" key="7">
    <source>
        <dbReference type="SAM" id="MobiDB-lite"/>
    </source>
</evidence>
<comment type="function">
    <text evidence="1">Signaling adapter that couples activated growth factor receptors to signaling pathways. Participates in a signaling cascade initiated by activated KIT and KITLG/SCF. Participates in signaling downstream of the angiopoietin receptor TEK/TIE2, and plays a role in the regulation of endothelial cell migration and sprouting angiogenesis (By similarity).</text>
</comment>
<comment type="subunit">
    <text evidence="2 3 4">Interacts with CPNE3; this interaction may mediate the binding of CPNE3 with ERBB2 (By similarity). Interacts with the Trk receptors NTRK1, NTRK2 and NTRK3; in a phosphotyrosine-dependent manner. Interacts with the NPXY motif of tyrosine-phosphorylated IGF1R and INSR in vitro via the PID domain. Once activated, binds to GRB2. Interacts with tyrosine-phosphorylated CD3T and DDR2. Interacts with the N-terminal region of APS. Interacts with phosphorylated LRP1 and IRS4. Interacts with INPP5D/SHIP1 and INPPL1/SHIP2. Interacts with ALK, GAB2, GRB7 and KIT. Interacts with PTPN6/SHP (tyrosine phosphorylated). Identified in a complex containing FGFR4, NCAM1, CDH2, PLCG1, FRS2, SRC, SHC1, GAP43 and CTTN. Interacts with FLT4 (tyrosine-phosphorylated). Interacts with EPHB1 and GRB2; activates the MAPK/ERK cascade to regulate cell migration. Interacts with PDGFRB (tyrosine-phosphorylated). Interacts with ERBB4. Interacts with TEK/TIE2 (tyrosine-phosphorylated). Interacts with PTK2/FAK1 (By similarity). Interacts with CEACAM1; this interaction is CEACAM1-phosphorylation-dependent and mediates interaction with EGFR or INSR resulting in decrease coupling of SHC1 to the MAPK3/ERK1-MAPK1/ERK2 pathway (By similarity). Interacts (via PID domain) with PEAK1 (when phosphorylated) (By similarity). Found in a complex with PPP1CA, PPP1CC, SHC1 and PEAK1 (By similarity).</text>
</comment>
<comment type="subcellular location">
    <subcellularLocation>
        <location evidence="1">Cytoplasm</location>
    </subcellularLocation>
    <subcellularLocation>
        <location evidence="2">Cell junction</location>
        <location evidence="2">Focal adhesion</location>
    </subcellularLocation>
</comment>
<comment type="PTM">
    <text evidence="1">Phosphorylated by activated epidermal growth factor receptor. Phosphorylated in response to KIT signaling. Tyrosine phosphorylated in response to FLT3 and FLT4 signaling and by ligand-activated ALK. Tyrosine phosphorylated by ligand-activated PDGFRB. Tyrosine phosphorylated by TEK/TIE2. May be tyrosine phosphorylated by activated PTK2/FAK1. Tyrosine phosphorylated by activated PTK2B/PYK2. Dephosphorylation by PTPN2 may regulate interaction with GRB2 (By similarity).</text>
</comment>
<gene>
    <name type="primary">SHC1</name>
</gene>
<dbReference type="EMBL" id="CR859992">
    <property type="protein sequence ID" value="CAH92143.1"/>
    <property type="molecule type" value="mRNA"/>
</dbReference>
<dbReference type="RefSeq" id="NP_001126253.1">
    <property type="nucleotide sequence ID" value="NM_001132781.1"/>
</dbReference>
<dbReference type="BMRB" id="Q5R7W7"/>
<dbReference type="SMR" id="Q5R7W7"/>
<dbReference type="FunCoup" id="Q5R7W7">
    <property type="interactions" value="2323"/>
</dbReference>
<dbReference type="STRING" id="9601.ENSPPYP00000000893"/>
<dbReference type="GeneID" id="100173225"/>
<dbReference type="KEGG" id="pon:100173225"/>
<dbReference type="CTD" id="6464"/>
<dbReference type="eggNOG" id="KOG3697">
    <property type="taxonomic scope" value="Eukaryota"/>
</dbReference>
<dbReference type="InParanoid" id="Q5R7W7"/>
<dbReference type="OrthoDB" id="9938362at2759"/>
<dbReference type="Proteomes" id="UP000001595">
    <property type="component" value="Unplaced"/>
</dbReference>
<dbReference type="GO" id="GO:0005737">
    <property type="term" value="C:cytoplasm"/>
    <property type="evidence" value="ECO:0007669"/>
    <property type="project" value="UniProtKB-SubCell"/>
</dbReference>
<dbReference type="GO" id="GO:0005925">
    <property type="term" value="C:focal adhesion"/>
    <property type="evidence" value="ECO:0007669"/>
    <property type="project" value="UniProtKB-SubCell"/>
</dbReference>
<dbReference type="GO" id="GO:0005886">
    <property type="term" value="C:plasma membrane"/>
    <property type="evidence" value="ECO:0007669"/>
    <property type="project" value="TreeGrafter"/>
</dbReference>
<dbReference type="GO" id="GO:0030971">
    <property type="term" value="F:receptor tyrosine kinase binding"/>
    <property type="evidence" value="ECO:0007669"/>
    <property type="project" value="TreeGrafter"/>
</dbReference>
<dbReference type="GO" id="GO:0001525">
    <property type="term" value="P:angiogenesis"/>
    <property type="evidence" value="ECO:0007669"/>
    <property type="project" value="UniProtKB-KW"/>
</dbReference>
<dbReference type="GO" id="GO:0071363">
    <property type="term" value="P:cellular response to growth factor stimulus"/>
    <property type="evidence" value="ECO:0000250"/>
    <property type="project" value="UniProtKB"/>
</dbReference>
<dbReference type="GO" id="GO:0007173">
    <property type="term" value="P:epidermal growth factor receptor signaling pathway"/>
    <property type="evidence" value="ECO:0007669"/>
    <property type="project" value="TreeGrafter"/>
</dbReference>
<dbReference type="GO" id="GO:0008286">
    <property type="term" value="P:insulin receptor signaling pathway"/>
    <property type="evidence" value="ECO:0007669"/>
    <property type="project" value="TreeGrafter"/>
</dbReference>
<dbReference type="GO" id="GO:0035556">
    <property type="term" value="P:intracellular signal transduction"/>
    <property type="evidence" value="ECO:0007669"/>
    <property type="project" value="InterPro"/>
</dbReference>
<dbReference type="CDD" id="cd01209">
    <property type="entry name" value="PTB_Shc"/>
    <property type="match status" value="1"/>
</dbReference>
<dbReference type="CDD" id="cd09925">
    <property type="entry name" value="SH2_SHC"/>
    <property type="match status" value="1"/>
</dbReference>
<dbReference type="FunFam" id="2.30.29.30:FF:000036">
    <property type="entry name" value="SHC-transforming protein 1 isoform 3"/>
    <property type="match status" value="1"/>
</dbReference>
<dbReference type="FunFam" id="3.30.505.10:FF:000005">
    <property type="entry name" value="SHC-transforming protein 1 isoform 3"/>
    <property type="match status" value="1"/>
</dbReference>
<dbReference type="Gene3D" id="2.30.29.30">
    <property type="entry name" value="Pleckstrin-homology domain (PH domain)/Phosphotyrosine-binding domain (PTB)"/>
    <property type="match status" value="1"/>
</dbReference>
<dbReference type="Gene3D" id="3.30.505.10">
    <property type="entry name" value="SH2 domain"/>
    <property type="match status" value="1"/>
</dbReference>
<dbReference type="InterPro" id="IPR051235">
    <property type="entry name" value="CEP152/SHC-Transforming"/>
</dbReference>
<dbReference type="InterPro" id="IPR011993">
    <property type="entry name" value="PH-like_dom_sf"/>
</dbReference>
<dbReference type="InterPro" id="IPR006019">
    <property type="entry name" value="PID_Shc-like"/>
</dbReference>
<dbReference type="InterPro" id="IPR006020">
    <property type="entry name" value="PTB/PI_dom"/>
</dbReference>
<dbReference type="InterPro" id="IPR000980">
    <property type="entry name" value="SH2"/>
</dbReference>
<dbReference type="InterPro" id="IPR036860">
    <property type="entry name" value="SH2_dom_sf"/>
</dbReference>
<dbReference type="InterPro" id="IPR035676">
    <property type="entry name" value="SHC_SH2"/>
</dbReference>
<dbReference type="PANTHER" id="PTHR10337">
    <property type="entry name" value="SHC TRANSFORMING PROTEIN"/>
    <property type="match status" value="1"/>
</dbReference>
<dbReference type="PANTHER" id="PTHR10337:SF2">
    <property type="entry name" value="SHC-TRANSFORMING PROTEIN 1"/>
    <property type="match status" value="1"/>
</dbReference>
<dbReference type="Pfam" id="PF00640">
    <property type="entry name" value="PID"/>
    <property type="match status" value="1"/>
</dbReference>
<dbReference type="Pfam" id="PF00017">
    <property type="entry name" value="SH2"/>
    <property type="match status" value="1"/>
</dbReference>
<dbReference type="PRINTS" id="PR00401">
    <property type="entry name" value="SH2DOMAIN"/>
</dbReference>
<dbReference type="PRINTS" id="PR00629">
    <property type="entry name" value="SHCPIDOMAIN"/>
</dbReference>
<dbReference type="SMART" id="SM00462">
    <property type="entry name" value="PTB"/>
    <property type="match status" value="1"/>
</dbReference>
<dbReference type="SMART" id="SM00252">
    <property type="entry name" value="SH2"/>
    <property type="match status" value="1"/>
</dbReference>
<dbReference type="SUPFAM" id="SSF50729">
    <property type="entry name" value="PH domain-like"/>
    <property type="match status" value="1"/>
</dbReference>
<dbReference type="SUPFAM" id="SSF55550">
    <property type="entry name" value="SH2 domain"/>
    <property type="match status" value="1"/>
</dbReference>
<dbReference type="PROSITE" id="PS01179">
    <property type="entry name" value="PID"/>
    <property type="match status" value="1"/>
</dbReference>
<dbReference type="PROSITE" id="PS50001">
    <property type="entry name" value="SH2"/>
    <property type="match status" value="1"/>
</dbReference>
<name>SHC1_PONAB</name>
<sequence>MDLLPPKPKYNPLRNESLSSLEEGASGSTPPEELPSPSASSLGPILPPLPGDDSPTTLCSFFPRMSNLRLANPAGGRPGSKGEPGRAADDGEGIVGAAMPDSGPLPLLRDMNKLSGGGGRRTRVEGGQLGGEEWTRHGSFVNKPTRGWLHPNDKVMGPGVSYLVRYMGCVEVLQSMRALDFNTRTQVTREAISLVCEAVPGAKGATRRRKPCSRPLSSILGRSNLKFAGMPITLTVSTSSLNLMAADCKQIIANHHMQSISFASGGDPDTAEYVAYVAKDPVNQRACHILECPEGLAQDVISTIGQAFELRFKQYLRNPPKLVTPHDRMAGFDGSAWDEEEEEPPDHQYYNDFPGKEPPLGGVVDMRLREGAAPGAARSTAPSAQTPSHLGATLPVGQPVGGDPEVRKQMPPPPPCPGRELFDDPSYVNVQNLDKARQAVGGAGPPNPAVNGSAPRDLFDMRPFEDALRVPPPPQSVSMAEQLRGEPWFHGKLSRREAEALLQLNGDFLVRESTTTPGQYVLTGLQSGQPKHLLLVDPEGVVRTKDHRFESVSHLIGYHMDNHLPIISAGSELCLQQPVERKL</sequence>